<reference key="1">
    <citation type="submission" date="1993-10" db="EMBL/GenBank/DDBJ databases">
        <title>Automated multiplex sequencing of the E.coli genome.</title>
        <authorList>
            <person name="Richterich P."/>
            <person name="Lakey N."/>
            <person name="Gryan G."/>
            <person name="Jaehn L."/>
            <person name="Mintz L."/>
            <person name="Robison K."/>
            <person name="Church G.M."/>
        </authorList>
    </citation>
    <scope>NUCLEOTIDE SEQUENCE [LARGE SCALE GENOMIC DNA]</scope>
    <source>
        <strain>K12 / BHB2600</strain>
    </source>
</reference>
<reference key="2">
    <citation type="journal article" date="1997" name="Science">
        <title>The complete genome sequence of Escherichia coli K-12.</title>
        <authorList>
            <person name="Blattner F.R."/>
            <person name="Plunkett G. III"/>
            <person name="Bloch C.A."/>
            <person name="Perna N.T."/>
            <person name="Burland V."/>
            <person name="Riley M."/>
            <person name="Collado-Vides J."/>
            <person name="Glasner J.D."/>
            <person name="Rode C.K."/>
            <person name="Mayhew G.F."/>
            <person name="Gregor J."/>
            <person name="Davis N.W."/>
            <person name="Kirkpatrick H.A."/>
            <person name="Goeden M.A."/>
            <person name="Rose D.J."/>
            <person name="Mau B."/>
            <person name="Shao Y."/>
        </authorList>
    </citation>
    <scope>NUCLEOTIDE SEQUENCE [LARGE SCALE GENOMIC DNA]</scope>
    <source>
        <strain>K12 / MG1655 / ATCC 47076</strain>
    </source>
</reference>
<reference key="3">
    <citation type="journal article" date="2006" name="Mol. Syst. Biol.">
        <title>Highly accurate genome sequences of Escherichia coli K-12 strains MG1655 and W3110.</title>
        <authorList>
            <person name="Hayashi K."/>
            <person name="Morooka N."/>
            <person name="Yamamoto Y."/>
            <person name="Fujita K."/>
            <person name="Isono K."/>
            <person name="Choi S."/>
            <person name="Ohtsubo E."/>
            <person name="Baba T."/>
            <person name="Wanner B.L."/>
            <person name="Mori H."/>
            <person name="Horiuchi T."/>
        </authorList>
    </citation>
    <scope>NUCLEOTIDE SEQUENCE [LARGE SCALE GENOMIC DNA]</scope>
    <source>
        <strain>K12 / W3110 / ATCC 27325 / DSM 5911</strain>
    </source>
</reference>
<name>YEHQ_ECOLI</name>
<keyword id="KW-0479">Metal-binding</keyword>
<keyword id="KW-1185">Reference proteome</keyword>
<keyword id="KW-0677">Repeat</keyword>
<keyword id="KW-0862">Zinc</keyword>
<keyword id="KW-0863">Zinc-finger</keyword>
<gene>
    <name type="primary">yehQ</name>
    <name type="ordered locus">b2122</name>
    <name type="ordered locus">JW2110</name>
</gene>
<proteinExistence type="predicted"/>
<sequence length="614" mass="67730">MNSLRPELLELTPQALTALSNAGFVKRSLKELENGNVPEISHENDALIATFSDGVRTQLANGQALKEAQCSCGANGMCRHRVMLVLSYQRLCATTQSTEKEEEWDPAIWLEELATLPDATRKRAQALVAKGITIELFCAPGEIPSARLPMSDVRFYSRSSIRFARCDCIEGTLCEHVVLAVQAFVEAKAQQAEFNHLIWQMRSEHVTSSDDPFASEEGNACRQYVQQLSQTLWLGGISQPLIHYEAAFNRALQAAETCNWRWVSESLRQLRASVDAFHARASHYNAGECLHQLAALNSRLNCAQEMARRDSIGEVPPVPWRTVVGSGIAGEAKLDHLRLVSLGMRCWQDIEHYGLRIWFTDPDTGSILHLSRSWPRSEQENSPAATRRLFSFQAGALAGGQIVSQAAKRSADGELLLATRNRLSSVVPLSPDAWQMLSAPLRQPGIVALREYLRQRPPACIRPLNQVDNLFILPVAECISLGWDSSRQTLDAQVISGEGEDNVLTLSLPASASAPYAVERMAALLQQTDDPVCLVSGFVSFVEGQLTLEPRVMMTKTRAWALDAETTPVAPLPSASVLPVPSTAHQLLIRCQALLIQLLHNGWRYQEQSAIGQA</sequence>
<feature type="chain" id="PRO_0000169136" description="Protein YehQ">
    <location>
        <begin position="1"/>
        <end position="614"/>
    </location>
</feature>
<feature type="zinc finger region" description="SWIM-type 1" evidence="1">
    <location>
        <begin position="55"/>
        <end position="89"/>
    </location>
</feature>
<feature type="zinc finger region" description="SWIM-type 2" evidence="1">
    <location>
        <begin position="151"/>
        <end position="185"/>
    </location>
</feature>
<comment type="miscellaneous">
    <text evidence="2">Missing up to 60 C-terminal residues compared to orthologs.</text>
</comment>
<comment type="sequence caution" evidence="2">
    <conflict type="erroneous initiation">
        <sequence resource="EMBL-CDS" id="AAA60485"/>
    </conflict>
    <text>Extended N-terminus.</text>
</comment>
<accession>P33353</accession>
<accession>A0A385XJJ8</accession>
<accession>Q2MAV8</accession>
<dbReference type="EMBL" id="U00007">
    <property type="protein sequence ID" value="AAA60485.1"/>
    <property type="status" value="ALT_INIT"/>
    <property type="molecule type" value="Genomic_DNA"/>
</dbReference>
<dbReference type="EMBL" id="U00096">
    <property type="protein sequence ID" value="AYC08228.1"/>
    <property type="molecule type" value="Genomic_DNA"/>
</dbReference>
<dbReference type="EMBL" id="AP009048">
    <property type="protein sequence ID" value="BAE76598.1"/>
    <property type="molecule type" value="Genomic_DNA"/>
</dbReference>
<dbReference type="PIR" id="A64980">
    <property type="entry name" value="A64980"/>
</dbReference>
<dbReference type="BioGRID" id="4260443">
    <property type="interactions" value="18"/>
</dbReference>
<dbReference type="DIP" id="DIP-11905N"/>
<dbReference type="FunCoup" id="P33353">
    <property type="interactions" value="143"/>
</dbReference>
<dbReference type="IntAct" id="P33353">
    <property type="interactions" value="6"/>
</dbReference>
<dbReference type="EnsemblBacteria" id="AYC08228">
    <property type="protein sequence ID" value="AYC08228"/>
    <property type="gene ID" value="b2122"/>
</dbReference>
<dbReference type="KEGG" id="ecj:JW2110"/>
<dbReference type="KEGG" id="ecoc:C3026_11900"/>
<dbReference type="PATRIC" id="fig|83333.103.peg.2987"/>
<dbReference type="EchoBASE" id="EB1941"/>
<dbReference type="eggNOG" id="COG4715">
    <property type="taxonomic scope" value="Bacteria"/>
</dbReference>
<dbReference type="HOGENOM" id="CLU_020792_0_1_6"/>
<dbReference type="InParanoid" id="P33353"/>
<dbReference type="OMA" id="CATVQPT"/>
<dbReference type="BioCyc" id="EcoCyc:EG12003-MONOMER"/>
<dbReference type="PRO" id="PR:P33353"/>
<dbReference type="Proteomes" id="UP000000625">
    <property type="component" value="Chromosome"/>
</dbReference>
<dbReference type="GO" id="GO:0005829">
    <property type="term" value="C:cytosol"/>
    <property type="evidence" value="ECO:0000314"/>
    <property type="project" value="EcoCyc"/>
</dbReference>
<dbReference type="GO" id="GO:0008270">
    <property type="term" value="F:zinc ion binding"/>
    <property type="evidence" value="ECO:0007669"/>
    <property type="project" value="UniProtKB-KW"/>
</dbReference>
<dbReference type="InterPro" id="IPR007527">
    <property type="entry name" value="Znf_SWIM"/>
</dbReference>
<dbReference type="Pfam" id="PF04434">
    <property type="entry name" value="SWIM"/>
    <property type="match status" value="2"/>
</dbReference>
<dbReference type="PROSITE" id="PS50966">
    <property type="entry name" value="ZF_SWIM"/>
    <property type="match status" value="2"/>
</dbReference>
<organism>
    <name type="scientific">Escherichia coli (strain K12)</name>
    <dbReference type="NCBI Taxonomy" id="83333"/>
    <lineage>
        <taxon>Bacteria</taxon>
        <taxon>Pseudomonadati</taxon>
        <taxon>Pseudomonadota</taxon>
        <taxon>Gammaproteobacteria</taxon>
        <taxon>Enterobacterales</taxon>
        <taxon>Enterobacteriaceae</taxon>
        <taxon>Escherichia</taxon>
    </lineage>
</organism>
<protein>
    <recommendedName>
        <fullName>Protein YehQ</fullName>
    </recommendedName>
</protein>
<evidence type="ECO:0000255" key="1">
    <source>
        <dbReference type="PROSITE-ProRule" id="PRU00325"/>
    </source>
</evidence>
<evidence type="ECO:0000305" key="2"/>